<keyword id="KW-0378">Hydrolase</keyword>
<protein>
    <recommendedName>
        <fullName evidence="1">Bis(5'-nucleosyl)-tetraphosphatase, symmetrical</fullName>
        <ecNumber evidence="1">3.6.1.41</ecNumber>
    </recommendedName>
    <alternativeName>
        <fullName evidence="1">Ap4A hydrolase</fullName>
    </alternativeName>
    <alternativeName>
        <fullName evidence="1">Diadenosine 5',5'''-P1,P4-tetraphosphate pyrophosphohydrolase</fullName>
    </alternativeName>
    <alternativeName>
        <fullName evidence="1">Diadenosine tetraphosphatase</fullName>
    </alternativeName>
</protein>
<organism>
    <name type="scientific">Xanthomonas axonopodis pv. citri (strain 306)</name>
    <dbReference type="NCBI Taxonomy" id="190486"/>
    <lineage>
        <taxon>Bacteria</taxon>
        <taxon>Pseudomonadati</taxon>
        <taxon>Pseudomonadota</taxon>
        <taxon>Gammaproteobacteria</taxon>
        <taxon>Lysobacterales</taxon>
        <taxon>Lysobacteraceae</taxon>
        <taxon>Xanthomonas</taxon>
    </lineage>
</organism>
<feature type="chain" id="PRO_0000198017" description="Bis(5'-nucleosyl)-tetraphosphatase, symmetrical">
    <location>
        <begin position="1"/>
        <end position="314"/>
    </location>
</feature>
<feature type="region of interest" description="Disordered" evidence="2">
    <location>
        <begin position="267"/>
        <end position="314"/>
    </location>
</feature>
<feature type="compositionally biased region" description="Low complexity" evidence="2">
    <location>
        <begin position="297"/>
        <end position="314"/>
    </location>
</feature>
<name>APAH_XANAC</name>
<reference key="1">
    <citation type="journal article" date="2002" name="Nature">
        <title>Comparison of the genomes of two Xanthomonas pathogens with differing host specificities.</title>
        <authorList>
            <person name="da Silva A.C.R."/>
            <person name="Ferro J.A."/>
            <person name="Reinach F.C."/>
            <person name="Farah C.S."/>
            <person name="Furlan L.R."/>
            <person name="Quaggio R.B."/>
            <person name="Monteiro-Vitorello C.B."/>
            <person name="Van Sluys M.A."/>
            <person name="Almeida N.F. Jr."/>
            <person name="Alves L.M.C."/>
            <person name="do Amaral A.M."/>
            <person name="Bertolini M.C."/>
            <person name="Camargo L.E.A."/>
            <person name="Camarotte G."/>
            <person name="Cannavan F."/>
            <person name="Cardozo J."/>
            <person name="Chambergo F."/>
            <person name="Ciapina L.P."/>
            <person name="Cicarelli R.M.B."/>
            <person name="Coutinho L.L."/>
            <person name="Cursino-Santos J.R."/>
            <person name="El-Dorry H."/>
            <person name="Faria J.B."/>
            <person name="Ferreira A.J.S."/>
            <person name="Ferreira R.C.C."/>
            <person name="Ferro M.I.T."/>
            <person name="Formighieri E.F."/>
            <person name="Franco M.C."/>
            <person name="Greggio C.C."/>
            <person name="Gruber A."/>
            <person name="Katsuyama A.M."/>
            <person name="Kishi L.T."/>
            <person name="Leite R.P."/>
            <person name="Lemos E.G.M."/>
            <person name="Lemos M.V.F."/>
            <person name="Locali E.C."/>
            <person name="Machado M.A."/>
            <person name="Madeira A.M.B.N."/>
            <person name="Martinez-Rossi N.M."/>
            <person name="Martins E.C."/>
            <person name="Meidanis J."/>
            <person name="Menck C.F.M."/>
            <person name="Miyaki C.Y."/>
            <person name="Moon D.H."/>
            <person name="Moreira L.M."/>
            <person name="Novo M.T.M."/>
            <person name="Okura V.K."/>
            <person name="Oliveira M.C."/>
            <person name="Oliveira V.R."/>
            <person name="Pereira H.A."/>
            <person name="Rossi A."/>
            <person name="Sena J.A.D."/>
            <person name="Silva C."/>
            <person name="de Souza R.F."/>
            <person name="Spinola L.A.F."/>
            <person name="Takita M.A."/>
            <person name="Tamura R.E."/>
            <person name="Teixeira E.C."/>
            <person name="Tezza R.I.D."/>
            <person name="Trindade dos Santos M."/>
            <person name="Truffi D."/>
            <person name="Tsai S.M."/>
            <person name="White F.F."/>
            <person name="Setubal J.C."/>
            <person name="Kitajima J.P."/>
        </authorList>
    </citation>
    <scope>NUCLEOTIDE SEQUENCE [LARGE SCALE GENOMIC DNA]</scope>
    <source>
        <strain>306</strain>
    </source>
</reference>
<gene>
    <name evidence="1" type="primary">apaH</name>
    <name type="ordered locus">XAC0861</name>
</gene>
<evidence type="ECO:0000255" key="1">
    <source>
        <dbReference type="HAMAP-Rule" id="MF_00199"/>
    </source>
</evidence>
<evidence type="ECO:0000256" key="2">
    <source>
        <dbReference type="SAM" id="MobiDB-lite"/>
    </source>
</evidence>
<proteinExistence type="inferred from homology"/>
<dbReference type="EC" id="3.6.1.41" evidence="1"/>
<dbReference type="EMBL" id="AE008923">
    <property type="protein sequence ID" value="AAM35749.1"/>
    <property type="molecule type" value="Genomic_DNA"/>
</dbReference>
<dbReference type="RefSeq" id="WP_003487447.1">
    <property type="nucleotide sequence ID" value="NC_003919.1"/>
</dbReference>
<dbReference type="SMR" id="Q8PP27"/>
<dbReference type="KEGG" id="xac:XAC0861"/>
<dbReference type="eggNOG" id="COG0639">
    <property type="taxonomic scope" value="Bacteria"/>
</dbReference>
<dbReference type="HOGENOM" id="CLU_056184_0_0_6"/>
<dbReference type="Proteomes" id="UP000000576">
    <property type="component" value="Chromosome"/>
</dbReference>
<dbReference type="GO" id="GO:0008803">
    <property type="term" value="F:bis(5'-nucleosyl)-tetraphosphatase (symmetrical) activity"/>
    <property type="evidence" value="ECO:0007669"/>
    <property type="project" value="UniProtKB-UniRule"/>
</dbReference>
<dbReference type="CDD" id="cd07422">
    <property type="entry name" value="MPP_ApaH"/>
    <property type="match status" value="1"/>
</dbReference>
<dbReference type="Gene3D" id="3.60.21.10">
    <property type="match status" value="1"/>
</dbReference>
<dbReference type="HAMAP" id="MF_00199">
    <property type="entry name" value="ApaH"/>
    <property type="match status" value="1"/>
</dbReference>
<dbReference type="InterPro" id="IPR004617">
    <property type="entry name" value="ApaH"/>
</dbReference>
<dbReference type="InterPro" id="IPR004843">
    <property type="entry name" value="Calcineurin-like_PHP_ApaH"/>
</dbReference>
<dbReference type="InterPro" id="IPR029052">
    <property type="entry name" value="Metallo-depent_PP-like"/>
</dbReference>
<dbReference type="InterPro" id="IPR006186">
    <property type="entry name" value="Ser/Thr-sp_prot-phosphatase"/>
</dbReference>
<dbReference type="NCBIfam" id="TIGR00668">
    <property type="entry name" value="apaH"/>
    <property type="match status" value="1"/>
</dbReference>
<dbReference type="NCBIfam" id="NF001204">
    <property type="entry name" value="PRK00166.1"/>
    <property type="match status" value="1"/>
</dbReference>
<dbReference type="PANTHER" id="PTHR40942">
    <property type="match status" value="1"/>
</dbReference>
<dbReference type="PANTHER" id="PTHR40942:SF4">
    <property type="entry name" value="CYTOCHROME C5"/>
    <property type="match status" value="1"/>
</dbReference>
<dbReference type="Pfam" id="PF00149">
    <property type="entry name" value="Metallophos"/>
    <property type="match status" value="1"/>
</dbReference>
<dbReference type="PIRSF" id="PIRSF000903">
    <property type="entry name" value="B5n-ttraPtase_sm"/>
    <property type="match status" value="1"/>
</dbReference>
<dbReference type="PRINTS" id="PR00114">
    <property type="entry name" value="STPHPHTASE"/>
</dbReference>
<dbReference type="SUPFAM" id="SSF56300">
    <property type="entry name" value="Metallo-dependent phosphatases"/>
    <property type="match status" value="1"/>
</dbReference>
<sequence length="314" mass="34941">MSVWAIGDLQGCYDITQRLLEKINFDPAQDTLWFCGDLVNRGGQSLETLRLVHSLRAHSVVVLGNHDLSLLAIGARSEEEQRKVNPDLLRIVMAEDRDALLDWLRMQKLAHVDRELGWMMIHAGLAPKWTTQMAEKHAREVEQQLQGGGYRKLLRNMYGDQPGWSPGLSGYDRSRAIINLFTRMRYCTPRGRIATDDKGTPGTQAQGLYPWFEVPGRVERDLKIVCGHWSALGLTITQGVHAIDTGAVWGGKLTALQLDTDELRVVQVPGNPITHPPKTAQRPRQPRRRQRQRGGDQAQTGPAPTPASTGPAGG</sequence>
<comment type="function">
    <text evidence="1">Hydrolyzes diadenosine 5',5'''-P1,P4-tetraphosphate to yield ADP.</text>
</comment>
<comment type="catalytic activity">
    <reaction evidence="1">
        <text>P(1),P(4)-bis(5'-adenosyl) tetraphosphate + H2O = 2 ADP + 2 H(+)</text>
        <dbReference type="Rhea" id="RHEA:24252"/>
        <dbReference type="ChEBI" id="CHEBI:15377"/>
        <dbReference type="ChEBI" id="CHEBI:15378"/>
        <dbReference type="ChEBI" id="CHEBI:58141"/>
        <dbReference type="ChEBI" id="CHEBI:456216"/>
        <dbReference type="EC" id="3.6.1.41"/>
    </reaction>
</comment>
<comment type="similarity">
    <text evidence="1">Belongs to the Ap4A hydrolase family.</text>
</comment>
<accession>Q8PP27</accession>